<gene>
    <name evidence="1" type="primary">pdxJ</name>
    <name type="ordered locus">lpg0946</name>
</gene>
<feature type="chain" id="PRO_0000231816" description="Pyridoxine 5'-phosphate synthase">
    <location>
        <begin position="1"/>
        <end position="248"/>
    </location>
</feature>
<feature type="active site" description="Proton acceptor" evidence="1">
    <location>
        <position position="46"/>
    </location>
</feature>
<feature type="active site" description="Proton acceptor" evidence="1">
    <location>
        <position position="73"/>
    </location>
</feature>
<feature type="active site" description="Proton donor" evidence="1">
    <location>
        <position position="194"/>
    </location>
</feature>
<feature type="binding site" evidence="1">
    <location>
        <position position="10"/>
    </location>
    <ligand>
        <name>3-amino-2-oxopropyl phosphate</name>
        <dbReference type="ChEBI" id="CHEBI:57279"/>
    </ligand>
</feature>
<feature type="binding site" evidence="1">
    <location>
        <begin position="12"/>
        <end position="13"/>
    </location>
    <ligand>
        <name>1-deoxy-D-xylulose 5-phosphate</name>
        <dbReference type="ChEBI" id="CHEBI:57792"/>
    </ligand>
</feature>
<feature type="binding site" evidence="1">
    <location>
        <position position="21"/>
    </location>
    <ligand>
        <name>3-amino-2-oxopropyl phosphate</name>
        <dbReference type="ChEBI" id="CHEBI:57279"/>
    </ligand>
</feature>
<feature type="binding site" evidence="1">
    <location>
        <position position="48"/>
    </location>
    <ligand>
        <name>1-deoxy-D-xylulose 5-phosphate</name>
        <dbReference type="ChEBI" id="CHEBI:57792"/>
    </ligand>
</feature>
<feature type="binding site" evidence="1">
    <location>
        <position position="53"/>
    </location>
    <ligand>
        <name>1-deoxy-D-xylulose 5-phosphate</name>
        <dbReference type="ChEBI" id="CHEBI:57792"/>
    </ligand>
</feature>
<feature type="binding site" evidence="1">
    <location>
        <position position="103"/>
    </location>
    <ligand>
        <name>1-deoxy-D-xylulose 5-phosphate</name>
        <dbReference type="ChEBI" id="CHEBI:57792"/>
    </ligand>
</feature>
<feature type="binding site" evidence="1">
    <location>
        <position position="195"/>
    </location>
    <ligand>
        <name>3-amino-2-oxopropyl phosphate</name>
        <dbReference type="ChEBI" id="CHEBI:57279"/>
    </ligand>
</feature>
<feature type="binding site" evidence="1">
    <location>
        <begin position="216"/>
        <end position="217"/>
    </location>
    <ligand>
        <name>3-amino-2-oxopropyl phosphate</name>
        <dbReference type="ChEBI" id="CHEBI:57279"/>
    </ligand>
</feature>
<feature type="site" description="Transition state stabilizer" evidence="1">
    <location>
        <position position="154"/>
    </location>
</feature>
<keyword id="KW-0963">Cytoplasm</keyword>
<keyword id="KW-0664">Pyridoxine biosynthesis</keyword>
<keyword id="KW-1185">Reference proteome</keyword>
<keyword id="KW-0808">Transferase</keyword>
<protein>
    <recommendedName>
        <fullName evidence="1">Pyridoxine 5'-phosphate synthase</fullName>
        <shortName evidence="1">PNP synthase</shortName>
        <ecNumber evidence="1">2.6.99.2</ecNumber>
    </recommendedName>
</protein>
<reference key="1">
    <citation type="journal article" date="2004" name="Science">
        <title>The genomic sequence of the accidental pathogen Legionella pneumophila.</title>
        <authorList>
            <person name="Chien M."/>
            <person name="Morozova I."/>
            <person name="Shi S."/>
            <person name="Sheng H."/>
            <person name="Chen J."/>
            <person name="Gomez S.M."/>
            <person name="Asamani G."/>
            <person name="Hill K."/>
            <person name="Nuara J."/>
            <person name="Feder M."/>
            <person name="Rineer J."/>
            <person name="Greenberg J.J."/>
            <person name="Steshenko V."/>
            <person name="Park S.H."/>
            <person name="Zhao B."/>
            <person name="Teplitskaya E."/>
            <person name="Edwards J.R."/>
            <person name="Pampou S."/>
            <person name="Georghiou A."/>
            <person name="Chou I.-C."/>
            <person name="Iannuccilli W."/>
            <person name="Ulz M.E."/>
            <person name="Kim D.H."/>
            <person name="Geringer-Sameth A."/>
            <person name="Goldsberry C."/>
            <person name="Morozov P."/>
            <person name="Fischer S.G."/>
            <person name="Segal G."/>
            <person name="Qu X."/>
            <person name="Rzhetsky A."/>
            <person name="Zhang P."/>
            <person name="Cayanis E."/>
            <person name="De Jong P.J."/>
            <person name="Ju J."/>
            <person name="Kalachikov S."/>
            <person name="Shuman H.A."/>
            <person name="Russo J.J."/>
        </authorList>
    </citation>
    <scope>NUCLEOTIDE SEQUENCE [LARGE SCALE GENOMIC DNA]</scope>
    <source>
        <strain>Philadelphia 1 / ATCC 33152 / DSM 7513</strain>
    </source>
</reference>
<dbReference type="EC" id="2.6.99.2" evidence="1"/>
<dbReference type="EMBL" id="AE017354">
    <property type="protein sequence ID" value="AAU27033.1"/>
    <property type="status" value="ALT_INIT"/>
    <property type="molecule type" value="Genomic_DNA"/>
</dbReference>
<dbReference type="RefSeq" id="WP_011946036.1">
    <property type="nucleotide sequence ID" value="NC_002942.5"/>
</dbReference>
<dbReference type="RefSeq" id="YP_094980.1">
    <property type="nucleotide sequence ID" value="NC_002942.5"/>
</dbReference>
<dbReference type="SMR" id="Q3V870"/>
<dbReference type="STRING" id="272624.lpg0946"/>
<dbReference type="PaxDb" id="272624-lpg0946"/>
<dbReference type="GeneID" id="57034934"/>
<dbReference type="KEGG" id="lpn:lpg0946"/>
<dbReference type="PATRIC" id="fig|272624.6.peg.979"/>
<dbReference type="eggNOG" id="COG0854">
    <property type="taxonomic scope" value="Bacteria"/>
</dbReference>
<dbReference type="HOGENOM" id="CLU_074563_0_0_6"/>
<dbReference type="OrthoDB" id="9806590at2"/>
<dbReference type="UniPathway" id="UPA00244">
    <property type="reaction ID" value="UER00313"/>
</dbReference>
<dbReference type="Proteomes" id="UP000000609">
    <property type="component" value="Chromosome"/>
</dbReference>
<dbReference type="GO" id="GO:0005829">
    <property type="term" value="C:cytosol"/>
    <property type="evidence" value="ECO:0007669"/>
    <property type="project" value="TreeGrafter"/>
</dbReference>
<dbReference type="GO" id="GO:0033856">
    <property type="term" value="F:pyridoxine 5'-phosphate synthase activity"/>
    <property type="evidence" value="ECO:0007669"/>
    <property type="project" value="UniProtKB-EC"/>
</dbReference>
<dbReference type="GO" id="GO:0008615">
    <property type="term" value="P:pyridoxine biosynthetic process"/>
    <property type="evidence" value="ECO:0007669"/>
    <property type="project" value="UniProtKB-UniRule"/>
</dbReference>
<dbReference type="CDD" id="cd00003">
    <property type="entry name" value="PNPsynthase"/>
    <property type="match status" value="1"/>
</dbReference>
<dbReference type="FunFam" id="3.20.20.70:FF:000042">
    <property type="entry name" value="Pyridoxine 5'-phosphate synthase"/>
    <property type="match status" value="1"/>
</dbReference>
<dbReference type="Gene3D" id="3.20.20.70">
    <property type="entry name" value="Aldolase class I"/>
    <property type="match status" value="1"/>
</dbReference>
<dbReference type="HAMAP" id="MF_00279">
    <property type="entry name" value="PdxJ"/>
    <property type="match status" value="1"/>
</dbReference>
<dbReference type="InterPro" id="IPR013785">
    <property type="entry name" value="Aldolase_TIM"/>
</dbReference>
<dbReference type="InterPro" id="IPR004569">
    <property type="entry name" value="PyrdxlP_synth_PdxJ"/>
</dbReference>
<dbReference type="InterPro" id="IPR036130">
    <property type="entry name" value="Pyridoxine-5'_phos_synth"/>
</dbReference>
<dbReference type="NCBIfam" id="TIGR00559">
    <property type="entry name" value="pdxJ"/>
    <property type="match status" value="1"/>
</dbReference>
<dbReference type="NCBIfam" id="NF003623">
    <property type="entry name" value="PRK05265.1-1"/>
    <property type="match status" value="1"/>
</dbReference>
<dbReference type="NCBIfam" id="NF003625">
    <property type="entry name" value="PRK05265.1-3"/>
    <property type="match status" value="1"/>
</dbReference>
<dbReference type="NCBIfam" id="NF003627">
    <property type="entry name" value="PRK05265.1-5"/>
    <property type="match status" value="1"/>
</dbReference>
<dbReference type="PANTHER" id="PTHR30456">
    <property type="entry name" value="PYRIDOXINE 5'-PHOSPHATE SYNTHASE"/>
    <property type="match status" value="1"/>
</dbReference>
<dbReference type="PANTHER" id="PTHR30456:SF0">
    <property type="entry name" value="PYRIDOXINE 5'-PHOSPHATE SYNTHASE"/>
    <property type="match status" value="1"/>
</dbReference>
<dbReference type="Pfam" id="PF03740">
    <property type="entry name" value="PdxJ"/>
    <property type="match status" value="1"/>
</dbReference>
<dbReference type="SUPFAM" id="SSF63892">
    <property type="entry name" value="Pyridoxine 5'-phosphate synthase"/>
    <property type="match status" value="1"/>
</dbReference>
<proteinExistence type="inferred from homology"/>
<sequence>MNKELLLGVNIDHIATIRQARGTRYPDPVQAAMDAEEAGADGITLHMREDLRHIQARDVRLIKQVLQTRMNLELAVTEAMLDFAEEISPEHACLVPEKREELTTEGGLDILTHRNVVEKAVRRLQLMGSEVSLFIDPDKEQIRAAVDVGAPVIELHTGCYADATSEEKQHYELQRIKEAAEFAASLNLVVNAGHGLHYHNVKPIAAIRELNELNIGHAIIARALFCGLKEAVRHMRQLMQEARLYVND</sequence>
<evidence type="ECO:0000255" key="1">
    <source>
        <dbReference type="HAMAP-Rule" id="MF_00279"/>
    </source>
</evidence>
<evidence type="ECO:0000305" key="2"/>
<accession>Q3V870</accession>
<organism>
    <name type="scientific">Legionella pneumophila subsp. pneumophila (strain Philadelphia 1 / ATCC 33152 / DSM 7513)</name>
    <dbReference type="NCBI Taxonomy" id="272624"/>
    <lineage>
        <taxon>Bacteria</taxon>
        <taxon>Pseudomonadati</taxon>
        <taxon>Pseudomonadota</taxon>
        <taxon>Gammaproteobacteria</taxon>
        <taxon>Legionellales</taxon>
        <taxon>Legionellaceae</taxon>
        <taxon>Legionella</taxon>
    </lineage>
</organism>
<name>PDXJ_LEGPH</name>
<comment type="function">
    <text evidence="1">Catalyzes the complicated ring closure reaction between the two acyclic compounds 1-deoxy-D-xylulose-5-phosphate (DXP) and 3-amino-2-oxopropyl phosphate (1-amino-acetone-3-phosphate or AAP) to form pyridoxine 5'-phosphate (PNP) and inorganic phosphate.</text>
</comment>
<comment type="catalytic activity">
    <reaction evidence="1">
        <text>3-amino-2-oxopropyl phosphate + 1-deoxy-D-xylulose 5-phosphate = pyridoxine 5'-phosphate + phosphate + 2 H2O + H(+)</text>
        <dbReference type="Rhea" id="RHEA:15265"/>
        <dbReference type="ChEBI" id="CHEBI:15377"/>
        <dbReference type="ChEBI" id="CHEBI:15378"/>
        <dbReference type="ChEBI" id="CHEBI:43474"/>
        <dbReference type="ChEBI" id="CHEBI:57279"/>
        <dbReference type="ChEBI" id="CHEBI:57792"/>
        <dbReference type="ChEBI" id="CHEBI:58589"/>
        <dbReference type="EC" id="2.6.99.2"/>
    </reaction>
</comment>
<comment type="pathway">
    <text evidence="1">Cofactor biosynthesis; pyridoxine 5'-phosphate biosynthesis; pyridoxine 5'-phosphate from D-erythrose 4-phosphate: step 5/5.</text>
</comment>
<comment type="subunit">
    <text evidence="1">Homooctamer; tetramer of dimers.</text>
</comment>
<comment type="subcellular location">
    <subcellularLocation>
        <location evidence="1">Cytoplasm</location>
    </subcellularLocation>
</comment>
<comment type="similarity">
    <text evidence="1">Belongs to the PNP synthase family.</text>
</comment>
<comment type="sequence caution" evidence="2">
    <conflict type="erroneous initiation">
        <sequence resource="EMBL-CDS" id="AAU27033"/>
    </conflict>
</comment>